<name>R35A1_ARATH</name>
<sequence>MVKGRQGERVRLYVRGTILGYKRSKSNQYPNTSLVQVEGVNTTEEVSWYKGKRMAYIYKAKTKKNGSHYRCIWGKVTRPHGNSGVVRAKFTSNLPPKSMGSRVRVFMYPSNI</sequence>
<keyword id="KW-1185">Reference proteome</keyword>
<keyword id="KW-0687">Ribonucleoprotein</keyword>
<keyword id="KW-0689">Ribosomal protein</keyword>
<evidence type="ECO:0000303" key="1">
    <source>
    </source>
</evidence>
<evidence type="ECO:0000305" key="2"/>
<comment type="similarity">
    <text evidence="2">Belongs to the eukaryotic ribosomal protein eL33 family.</text>
</comment>
<gene>
    <name type="primary">RPL35AA</name>
    <name type="ordered locus">At1g07070</name>
    <name type="ORF">F10K1.22</name>
</gene>
<organism>
    <name type="scientific">Arabidopsis thaliana</name>
    <name type="common">Mouse-ear cress</name>
    <dbReference type="NCBI Taxonomy" id="3702"/>
    <lineage>
        <taxon>Eukaryota</taxon>
        <taxon>Viridiplantae</taxon>
        <taxon>Streptophyta</taxon>
        <taxon>Embryophyta</taxon>
        <taxon>Tracheophyta</taxon>
        <taxon>Spermatophyta</taxon>
        <taxon>Magnoliopsida</taxon>
        <taxon>eudicotyledons</taxon>
        <taxon>Gunneridae</taxon>
        <taxon>Pentapetalae</taxon>
        <taxon>rosids</taxon>
        <taxon>malvids</taxon>
        <taxon>Brassicales</taxon>
        <taxon>Brassicaceae</taxon>
        <taxon>Camelineae</taxon>
        <taxon>Arabidopsis</taxon>
    </lineage>
</organism>
<dbReference type="EMBL" id="AC067971">
    <property type="protein sequence ID" value="AAF82213.1"/>
    <property type="molecule type" value="Genomic_DNA"/>
</dbReference>
<dbReference type="EMBL" id="CP002684">
    <property type="protein sequence ID" value="AEE28074.1"/>
    <property type="molecule type" value="Genomic_DNA"/>
</dbReference>
<dbReference type="EMBL" id="AK119060">
    <property type="protein sequence ID" value="BAC43636.1"/>
    <property type="molecule type" value="mRNA"/>
</dbReference>
<dbReference type="EMBL" id="BT004714">
    <property type="protein sequence ID" value="AAO42960.1"/>
    <property type="molecule type" value="mRNA"/>
</dbReference>
<dbReference type="EMBL" id="AY086795">
    <property type="protein sequence ID" value="AAM63844.1"/>
    <property type="molecule type" value="mRNA"/>
</dbReference>
<dbReference type="PIR" id="E86205">
    <property type="entry name" value="E86205"/>
</dbReference>
<dbReference type="RefSeq" id="NP_172188.1">
    <property type="nucleotide sequence ID" value="NM_100581.3"/>
</dbReference>
<dbReference type="SMR" id="Q9LMK0"/>
<dbReference type="BioGRID" id="22459">
    <property type="interactions" value="134"/>
</dbReference>
<dbReference type="FunCoup" id="Q9LMK0">
    <property type="interactions" value="2540"/>
</dbReference>
<dbReference type="STRING" id="3702.Q9LMK0"/>
<dbReference type="PaxDb" id="3702-AT1G07070.1"/>
<dbReference type="ProteomicsDB" id="236617"/>
<dbReference type="EnsemblPlants" id="AT1G07070.1">
    <property type="protein sequence ID" value="AT1G07070.1"/>
    <property type="gene ID" value="AT1G07070"/>
</dbReference>
<dbReference type="GeneID" id="837218"/>
<dbReference type="Gramene" id="AT1G07070.1">
    <property type="protein sequence ID" value="AT1G07070.1"/>
    <property type="gene ID" value="AT1G07070"/>
</dbReference>
<dbReference type="KEGG" id="ath:AT1G07070"/>
<dbReference type="Araport" id="AT1G07070"/>
<dbReference type="TAIR" id="AT1G07070"/>
<dbReference type="eggNOG" id="KOG0887">
    <property type="taxonomic scope" value="Eukaryota"/>
</dbReference>
<dbReference type="HOGENOM" id="CLU_100745_2_0_1"/>
<dbReference type="InParanoid" id="Q9LMK0"/>
<dbReference type="OMA" id="DETRVIW"/>
<dbReference type="OrthoDB" id="1024826at2759"/>
<dbReference type="PhylomeDB" id="Q9LMK0"/>
<dbReference type="PRO" id="PR:Q9LMK0"/>
<dbReference type="Proteomes" id="UP000006548">
    <property type="component" value="Chromosome 1"/>
</dbReference>
<dbReference type="ExpressionAtlas" id="Q9LMK0">
    <property type="expression patterns" value="baseline and differential"/>
</dbReference>
<dbReference type="GO" id="GO:0022625">
    <property type="term" value="C:cytosolic large ribosomal subunit"/>
    <property type="evidence" value="ECO:0007005"/>
    <property type="project" value="TAIR"/>
</dbReference>
<dbReference type="GO" id="GO:0005576">
    <property type="term" value="C:extracellular region"/>
    <property type="evidence" value="ECO:0007005"/>
    <property type="project" value="TAIR"/>
</dbReference>
<dbReference type="GO" id="GO:0003729">
    <property type="term" value="F:mRNA binding"/>
    <property type="evidence" value="ECO:0000314"/>
    <property type="project" value="TAIR"/>
</dbReference>
<dbReference type="GO" id="GO:0003735">
    <property type="term" value="F:structural constituent of ribosome"/>
    <property type="evidence" value="ECO:0000314"/>
    <property type="project" value="CAFA"/>
</dbReference>
<dbReference type="GO" id="GO:0006412">
    <property type="term" value="P:translation"/>
    <property type="evidence" value="ECO:0007669"/>
    <property type="project" value="InterPro"/>
</dbReference>
<dbReference type="FunFam" id="2.40.10.190:FF:000001">
    <property type="entry name" value="60S ribosomal protein L35a"/>
    <property type="match status" value="1"/>
</dbReference>
<dbReference type="Gene3D" id="2.40.10.190">
    <property type="entry name" value="translation elongation factor selb, chain A, domain 4"/>
    <property type="match status" value="1"/>
</dbReference>
<dbReference type="HAMAP" id="MF_00573">
    <property type="entry name" value="Ribosomal_eL33"/>
    <property type="match status" value="1"/>
</dbReference>
<dbReference type="InterPro" id="IPR001780">
    <property type="entry name" value="Ribosomal_eL33"/>
</dbReference>
<dbReference type="InterPro" id="IPR018266">
    <property type="entry name" value="Ribosomal_eL33_CS"/>
</dbReference>
<dbReference type="InterPro" id="IPR038661">
    <property type="entry name" value="Ribosomal_eL33_sf"/>
</dbReference>
<dbReference type="InterPro" id="IPR009000">
    <property type="entry name" value="Transl_B-barrel_sf"/>
</dbReference>
<dbReference type="PANTHER" id="PTHR10902">
    <property type="entry name" value="60S RIBOSOMAL PROTEIN L35A"/>
    <property type="match status" value="1"/>
</dbReference>
<dbReference type="Pfam" id="PF01247">
    <property type="entry name" value="Ribosomal_L35Ae"/>
    <property type="match status" value="1"/>
</dbReference>
<dbReference type="SUPFAM" id="SSF50447">
    <property type="entry name" value="Translation proteins"/>
    <property type="match status" value="1"/>
</dbReference>
<dbReference type="PROSITE" id="PS01105">
    <property type="entry name" value="RIBOSOMAL_L35AE"/>
    <property type="match status" value="1"/>
</dbReference>
<feature type="chain" id="PRO_0000245490" description="Large ribosomal subunit protein eL33w">
    <location>
        <begin position="1"/>
        <end position="112"/>
    </location>
</feature>
<protein>
    <recommendedName>
        <fullName evidence="1">Large ribosomal subunit protein eL33w</fullName>
    </recommendedName>
    <alternativeName>
        <fullName>60S ribosomal protein L35a-1</fullName>
    </alternativeName>
</protein>
<reference key="1">
    <citation type="journal article" date="2000" name="Nature">
        <title>Sequence and analysis of chromosome 1 of the plant Arabidopsis thaliana.</title>
        <authorList>
            <person name="Theologis A."/>
            <person name="Ecker J.R."/>
            <person name="Palm C.J."/>
            <person name="Federspiel N.A."/>
            <person name="Kaul S."/>
            <person name="White O."/>
            <person name="Alonso J."/>
            <person name="Altafi H."/>
            <person name="Araujo R."/>
            <person name="Bowman C.L."/>
            <person name="Brooks S.Y."/>
            <person name="Buehler E."/>
            <person name="Chan A."/>
            <person name="Chao Q."/>
            <person name="Chen H."/>
            <person name="Cheuk R.F."/>
            <person name="Chin C.W."/>
            <person name="Chung M.K."/>
            <person name="Conn L."/>
            <person name="Conway A.B."/>
            <person name="Conway A.R."/>
            <person name="Creasy T.H."/>
            <person name="Dewar K."/>
            <person name="Dunn P."/>
            <person name="Etgu P."/>
            <person name="Feldblyum T.V."/>
            <person name="Feng J.-D."/>
            <person name="Fong B."/>
            <person name="Fujii C.Y."/>
            <person name="Gill J.E."/>
            <person name="Goldsmith A.D."/>
            <person name="Haas B."/>
            <person name="Hansen N.F."/>
            <person name="Hughes B."/>
            <person name="Huizar L."/>
            <person name="Hunter J.L."/>
            <person name="Jenkins J."/>
            <person name="Johnson-Hopson C."/>
            <person name="Khan S."/>
            <person name="Khaykin E."/>
            <person name="Kim C.J."/>
            <person name="Koo H.L."/>
            <person name="Kremenetskaia I."/>
            <person name="Kurtz D.B."/>
            <person name="Kwan A."/>
            <person name="Lam B."/>
            <person name="Langin-Hooper S."/>
            <person name="Lee A."/>
            <person name="Lee J.M."/>
            <person name="Lenz C.A."/>
            <person name="Li J.H."/>
            <person name="Li Y.-P."/>
            <person name="Lin X."/>
            <person name="Liu S.X."/>
            <person name="Liu Z.A."/>
            <person name="Luros J.S."/>
            <person name="Maiti R."/>
            <person name="Marziali A."/>
            <person name="Militscher J."/>
            <person name="Miranda M."/>
            <person name="Nguyen M."/>
            <person name="Nierman W.C."/>
            <person name="Osborne B.I."/>
            <person name="Pai G."/>
            <person name="Peterson J."/>
            <person name="Pham P.K."/>
            <person name="Rizzo M."/>
            <person name="Rooney T."/>
            <person name="Rowley D."/>
            <person name="Sakano H."/>
            <person name="Salzberg S.L."/>
            <person name="Schwartz J.R."/>
            <person name="Shinn P."/>
            <person name="Southwick A.M."/>
            <person name="Sun H."/>
            <person name="Tallon L.J."/>
            <person name="Tambunga G."/>
            <person name="Toriumi M.J."/>
            <person name="Town C.D."/>
            <person name="Utterback T."/>
            <person name="Van Aken S."/>
            <person name="Vaysberg M."/>
            <person name="Vysotskaia V.S."/>
            <person name="Walker M."/>
            <person name="Wu D."/>
            <person name="Yu G."/>
            <person name="Fraser C.M."/>
            <person name="Venter J.C."/>
            <person name="Davis R.W."/>
        </authorList>
    </citation>
    <scope>NUCLEOTIDE SEQUENCE [LARGE SCALE GENOMIC DNA]</scope>
    <source>
        <strain>cv. Columbia</strain>
    </source>
</reference>
<reference key="2">
    <citation type="journal article" date="2017" name="Plant J.">
        <title>Araport11: a complete reannotation of the Arabidopsis thaliana reference genome.</title>
        <authorList>
            <person name="Cheng C.Y."/>
            <person name="Krishnakumar V."/>
            <person name="Chan A.P."/>
            <person name="Thibaud-Nissen F."/>
            <person name="Schobel S."/>
            <person name="Town C.D."/>
        </authorList>
    </citation>
    <scope>GENOME REANNOTATION</scope>
    <source>
        <strain>cv. Columbia</strain>
    </source>
</reference>
<reference key="3">
    <citation type="journal article" date="2002" name="Science">
        <title>Functional annotation of a full-length Arabidopsis cDNA collection.</title>
        <authorList>
            <person name="Seki M."/>
            <person name="Narusaka M."/>
            <person name="Kamiya A."/>
            <person name="Ishida J."/>
            <person name="Satou M."/>
            <person name="Sakurai T."/>
            <person name="Nakajima M."/>
            <person name="Enju A."/>
            <person name="Akiyama K."/>
            <person name="Oono Y."/>
            <person name="Muramatsu M."/>
            <person name="Hayashizaki Y."/>
            <person name="Kawai J."/>
            <person name="Carninci P."/>
            <person name="Itoh M."/>
            <person name="Ishii Y."/>
            <person name="Arakawa T."/>
            <person name="Shibata K."/>
            <person name="Shinagawa A."/>
            <person name="Shinozaki K."/>
        </authorList>
    </citation>
    <scope>NUCLEOTIDE SEQUENCE [LARGE SCALE MRNA]</scope>
    <source>
        <strain>cv. Columbia</strain>
    </source>
</reference>
<reference key="4">
    <citation type="journal article" date="2003" name="Science">
        <title>Empirical analysis of transcriptional activity in the Arabidopsis genome.</title>
        <authorList>
            <person name="Yamada K."/>
            <person name="Lim J."/>
            <person name="Dale J.M."/>
            <person name="Chen H."/>
            <person name="Shinn P."/>
            <person name="Palm C.J."/>
            <person name="Southwick A.M."/>
            <person name="Wu H.C."/>
            <person name="Kim C.J."/>
            <person name="Nguyen M."/>
            <person name="Pham P.K."/>
            <person name="Cheuk R.F."/>
            <person name="Karlin-Newmann G."/>
            <person name="Liu S.X."/>
            <person name="Lam B."/>
            <person name="Sakano H."/>
            <person name="Wu T."/>
            <person name="Yu G."/>
            <person name="Miranda M."/>
            <person name="Quach H.L."/>
            <person name="Tripp M."/>
            <person name="Chang C.H."/>
            <person name="Lee J.M."/>
            <person name="Toriumi M.J."/>
            <person name="Chan M.M."/>
            <person name="Tang C.C."/>
            <person name="Onodera C.S."/>
            <person name="Deng J.M."/>
            <person name="Akiyama K."/>
            <person name="Ansari Y."/>
            <person name="Arakawa T."/>
            <person name="Banh J."/>
            <person name="Banno F."/>
            <person name="Bowser L."/>
            <person name="Brooks S.Y."/>
            <person name="Carninci P."/>
            <person name="Chao Q."/>
            <person name="Choy N."/>
            <person name="Enju A."/>
            <person name="Goldsmith A.D."/>
            <person name="Gurjal M."/>
            <person name="Hansen N.F."/>
            <person name="Hayashizaki Y."/>
            <person name="Johnson-Hopson C."/>
            <person name="Hsuan V.W."/>
            <person name="Iida K."/>
            <person name="Karnes M."/>
            <person name="Khan S."/>
            <person name="Koesema E."/>
            <person name="Ishida J."/>
            <person name="Jiang P.X."/>
            <person name="Jones T."/>
            <person name="Kawai J."/>
            <person name="Kamiya A."/>
            <person name="Meyers C."/>
            <person name="Nakajima M."/>
            <person name="Narusaka M."/>
            <person name="Seki M."/>
            <person name="Sakurai T."/>
            <person name="Satou M."/>
            <person name="Tamse R."/>
            <person name="Vaysberg M."/>
            <person name="Wallender E.K."/>
            <person name="Wong C."/>
            <person name="Yamamura Y."/>
            <person name="Yuan S."/>
            <person name="Shinozaki K."/>
            <person name="Davis R.W."/>
            <person name="Theologis A."/>
            <person name="Ecker J.R."/>
        </authorList>
    </citation>
    <scope>NUCLEOTIDE SEQUENCE [LARGE SCALE MRNA]</scope>
    <source>
        <strain>cv. Columbia</strain>
    </source>
</reference>
<reference key="5">
    <citation type="submission" date="2002-03" db="EMBL/GenBank/DDBJ databases">
        <title>Full-length cDNA from Arabidopsis thaliana.</title>
        <authorList>
            <person name="Brover V.V."/>
            <person name="Troukhan M.E."/>
            <person name="Alexandrov N.A."/>
            <person name="Lu Y.-P."/>
            <person name="Flavell R.B."/>
            <person name="Feldmann K.A."/>
        </authorList>
    </citation>
    <scope>NUCLEOTIDE SEQUENCE [LARGE SCALE MRNA]</scope>
</reference>
<reference key="6">
    <citation type="journal article" date="2001" name="Plant Physiol.">
        <title>The organization of cytoplasmic ribosomal protein genes in the Arabidopsis genome.</title>
        <authorList>
            <person name="Barakat A."/>
            <person name="Szick-Miranda K."/>
            <person name="Chang I.-F."/>
            <person name="Guyot R."/>
            <person name="Blanc G."/>
            <person name="Cooke R."/>
            <person name="Delseny M."/>
            <person name="Bailey-Serres J."/>
        </authorList>
    </citation>
    <scope>GENE FAMILY ORGANIZATION</scope>
    <scope>NOMENCLATURE</scope>
</reference>
<reference key="7">
    <citation type="journal article" date="2023" name="Plant Cell">
        <title>An updated nomenclature for plant ribosomal protein genes.</title>
        <authorList>
            <person name="Scarpin M.R."/>
            <person name="Busche M."/>
            <person name="Martinez R.E."/>
            <person name="Harper L.C."/>
            <person name="Reiser L."/>
            <person name="Szakonyi D."/>
            <person name="Merchante C."/>
            <person name="Lan T."/>
            <person name="Xiong W."/>
            <person name="Mo B."/>
            <person name="Tang G."/>
            <person name="Chen X."/>
            <person name="Bailey-Serres J."/>
            <person name="Browning K.S."/>
            <person name="Brunkard J.O."/>
        </authorList>
    </citation>
    <scope>NOMENCLATURE</scope>
</reference>
<accession>Q9LMK0</accession>
<proteinExistence type="inferred from homology"/>